<keyword id="KW-0025">Alternative splicing</keyword>
<keyword id="KW-0040">ANK repeat</keyword>
<keyword id="KW-0963">Cytoplasm</keyword>
<keyword id="KW-0539">Nucleus</keyword>
<keyword id="KW-1185">Reference proteome</keyword>
<keyword id="KW-0677">Repeat</keyword>
<protein>
    <recommendedName>
        <fullName evidence="6">Photoreceptor ankyrin repeat protein</fullName>
    </recommendedName>
    <alternativeName>
        <fullName evidence="8">Ankyrin repeat domain-containing protein 33</fullName>
    </alternativeName>
</protein>
<organism>
    <name type="scientific">Mus musculus</name>
    <name type="common">Mouse</name>
    <dbReference type="NCBI Taxonomy" id="10090"/>
    <lineage>
        <taxon>Eukaryota</taxon>
        <taxon>Metazoa</taxon>
        <taxon>Chordata</taxon>
        <taxon>Craniata</taxon>
        <taxon>Vertebrata</taxon>
        <taxon>Euteleostomi</taxon>
        <taxon>Mammalia</taxon>
        <taxon>Eutheria</taxon>
        <taxon>Euarchontoglires</taxon>
        <taxon>Glires</taxon>
        <taxon>Rodentia</taxon>
        <taxon>Myomorpha</taxon>
        <taxon>Muroidea</taxon>
        <taxon>Muridae</taxon>
        <taxon>Murinae</taxon>
        <taxon>Mus</taxon>
        <taxon>Mus</taxon>
    </lineage>
</organism>
<gene>
    <name evidence="8" type="primary">Ankrd33</name>
    <name evidence="6" type="synonym">Panky</name>
</gene>
<proteinExistence type="evidence at protein level"/>
<evidence type="ECO:0000255" key="1"/>
<evidence type="ECO:0000256" key="2">
    <source>
        <dbReference type="SAM" id="MobiDB-lite"/>
    </source>
</evidence>
<evidence type="ECO:0000269" key="3">
    <source>
    </source>
</evidence>
<evidence type="ECO:0000303" key="4">
    <source>
    </source>
</evidence>
<evidence type="ECO:0000303" key="5">
    <source>
    </source>
</evidence>
<evidence type="ECO:0000303" key="6">
    <source>
    </source>
</evidence>
<evidence type="ECO:0000305" key="7"/>
<evidence type="ECO:0000312" key="8">
    <source>
        <dbReference type="MGI" id="MGI:2443398"/>
    </source>
</evidence>
<accession>Q8BXP5</accession>
<accession>D5G1T0</accession>
<accession>Q8BXP4</accession>
<accession>Q8R1Z1</accession>
<reference key="1">
    <citation type="journal article" date="2010" name="FEBS Lett.">
        <title>Panky, a novel photoreceptor-specific ankyrin repeat protein, is a transcriptional cofactor that suppresses CRX-regulated photoreceptor genes.</title>
        <authorList>
            <person name="Sanuki R."/>
            <person name="Omori Y."/>
            <person name="Koike C."/>
            <person name="Sato S."/>
            <person name="Furukawa T."/>
        </authorList>
    </citation>
    <scope>NUCLEOTIDE SEQUENCE [MRNA] (ISOFORM 1)</scope>
    <scope>ALTERNATIVE SPLICING (ISOFORM 2)</scope>
    <scope>FUNCTION (ISOFORM 1)</scope>
    <scope>SUBCELLULAR LOCATION (ISOFORM 1)</scope>
    <scope>TISSUE SPECIFICITY (ISOFORMS 1 AND 2)</scope>
    <scope>DEVELOPMENTAL STAGE (ISOFORM 1)</scope>
    <scope>INDUCTION (ISOFORM 1)</scope>
    <source>
        <tissue>Retina</tissue>
    </source>
</reference>
<reference key="2">
    <citation type="journal article" date="2005" name="Science">
        <title>The transcriptional landscape of the mammalian genome.</title>
        <authorList>
            <person name="Carninci P."/>
            <person name="Kasukawa T."/>
            <person name="Katayama S."/>
            <person name="Gough J."/>
            <person name="Frith M.C."/>
            <person name="Maeda N."/>
            <person name="Oyama R."/>
            <person name="Ravasi T."/>
            <person name="Lenhard B."/>
            <person name="Wells C."/>
            <person name="Kodzius R."/>
            <person name="Shimokawa K."/>
            <person name="Bajic V.B."/>
            <person name="Brenner S.E."/>
            <person name="Batalov S."/>
            <person name="Forrest A.R."/>
            <person name="Zavolan M."/>
            <person name="Davis M.J."/>
            <person name="Wilming L.G."/>
            <person name="Aidinis V."/>
            <person name="Allen J.E."/>
            <person name="Ambesi-Impiombato A."/>
            <person name="Apweiler R."/>
            <person name="Aturaliya R.N."/>
            <person name="Bailey T.L."/>
            <person name="Bansal M."/>
            <person name="Baxter L."/>
            <person name="Beisel K.W."/>
            <person name="Bersano T."/>
            <person name="Bono H."/>
            <person name="Chalk A.M."/>
            <person name="Chiu K.P."/>
            <person name="Choudhary V."/>
            <person name="Christoffels A."/>
            <person name="Clutterbuck D.R."/>
            <person name="Crowe M.L."/>
            <person name="Dalla E."/>
            <person name="Dalrymple B.P."/>
            <person name="de Bono B."/>
            <person name="Della Gatta G."/>
            <person name="di Bernardo D."/>
            <person name="Down T."/>
            <person name="Engstrom P."/>
            <person name="Fagiolini M."/>
            <person name="Faulkner G."/>
            <person name="Fletcher C.F."/>
            <person name="Fukushima T."/>
            <person name="Furuno M."/>
            <person name="Futaki S."/>
            <person name="Gariboldi M."/>
            <person name="Georgii-Hemming P."/>
            <person name="Gingeras T.R."/>
            <person name="Gojobori T."/>
            <person name="Green R.E."/>
            <person name="Gustincich S."/>
            <person name="Harbers M."/>
            <person name="Hayashi Y."/>
            <person name="Hensch T.K."/>
            <person name="Hirokawa N."/>
            <person name="Hill D."/>
            <person name="Huminiecki L."/>
            <person name="Iacono M."/>
            <person name="Ikeo K."/>
            <person name="Iwama A."/>
            <person name="Ishikawa T."/>
            <person name="Jakt M."/>
            <person name="Kanapin A."/>
            <person name="Katoh M."/>
            <person name="Kawasawa Y."/>
            <person name="Kelso J."/>
            <person name="Kitamura H."/>
            <person name="Kitano H."/>
            <person name="Kollias G."/>
            <person name="Krishnan S.P."/>
            <person name="Kruger A."/>
            <person name="Kummerfeld S.K."/>
            <person name="Kurochkin I.V."/>
            <person name="Lareau L.F."/>
            <person name="Lazarevic D."/>
            <person name="Lipovich L."/>
            <person name="Liu J."/>
            <person name="Liuni S."/>
            <person name="McWilliam S."/>
            <person name="Madan Babu M."/>
            <person name="Madera M."/>
            <person name="Marchionni L."/>
            <person name="Matsuda H."/>
            <person name="Matsuzawa S."/>
            <person name="Miki H."/>
            <person name="Mignone F."/>
            <person name="Miyake S."/>
            <person name="Morris K."/>
            <person name="Mottagui-Tabar S."/>
            <person name="Mulder N."/>
            <person name="Nakano N."/>
            <person name="Nakauchi H."/>
            <person name="Ng P."/>
            <person name="Nilsson R."/>
            <person name="Nishiguchi S."/>
            <person name="Nishikawa S."/>
            <person name="Nori F."/>
            <person name="Ohara O."/>
            <person name="Okazaki Y."/>
            <person name="Orlando V."/>
            <person name="Pang K.C."/>
            <person name="Pavan W.J."/>
            <person name="Pavesi G."/>
            <person name="Pesole G."/>
            <person name="Petrovsky N."/>
            <person name="Piazza S."/>
            <person name="Reed J."/>
            <person name="Reid J.F."/>
            <person name="Ring B.Z."/>
            <person name="Ringwald M."/>
            <person name="Rost B."/>
            <person name="Ruan Y."/>
            <person name="Salzberg S.L."/>
            <person name="Sandelin A."/>
            <person name="Schneider C."/>
            <person name="Schoenbach C."/>
            <person name="Sekiguchi K."/>
            <person name="Semple C.A."/>
            <person name="Seno S."/>
            <person name="Sessa L."/>
            <person name="Sheng Y."/>
            <person name="Shibata Y."/>
            <person name="Shimada H."/>
            <person name="Shimada K."/>
            <person name="Silva D."/>
            <person name="Sinclair B."/>
            <person name="Sperling S."/>
            <person name="Stupka E."/>
            <person name="Sugiura K."/>
            <person name="Sultana R."/>
            <person name="Takenaka Y."/>
            <person name="Taki K."/>
            <person name="Tammoja K."/>
            <person name="Tan S.L."/>
            <person name="Tang S."/>
            <person name="Taylor M.S."/>
            <person name="Tegner J."/>
            <person name="Teichmann S.A."/>
            <person name="Ueda H.R."/>
            <person name="van Nimwegen E."/>
            <person name="Verardo R."/>
            <person name="Wei C.L."/>
            <person name="Yagi K."/>
            <person name="Yamanishi H."/>
            <person name="Zabarovsky E."/>
            <person name="Zhu S."/>
            <person name="Zimmer A."/>
            <person name="Hide W."/>
            <person name="Bult C."/>
            <person name="Grimmond S.M."/>
            <person name="Teasdale R.D."/>
            <person name="Liu E.T."/>
            <person name="Brusic V."/>
            <person name="Quackenbush J."/>
            <person name="Wahlestedt C."/>
            <person name="Mattick J.S."/>
            <person name="Hume D.A."/>
            <person name="Kai C."/>
            <person name="Sasaki D."/>
            <person name="Tomaru Y."/>
            <person name="Fukuda S."/>
            <person name="Kanamori-Katayama M."/>
            <person name="Suzuki M."/>
            <person name="Aoki J."/>
            <person name="Arakawa T."/>
            <person name="Iida J."/>
            <person name="Imamura K."/>
            <person name="Itoh M."/>
            <person name="Kato T."/>
            <person name="Kawaji H."/>
            <person name="Kawagashira N."/>
            <person name="Kawashima T."/>
            <person name="Kojima M."/>
            <person name="Kondo S."/>
            <person name="Konno H."/>
            <person name="Nakano K."/>
            <person name="Ninomiya N."/>
            <person name="Nishio T."/>
            <person name="Okada M."/>
            <person name="Plessy C."/>
            <person name="Shibata K."/>
            <person name="Shiraki T."/>
            <person name="Suzuki S."/>
            <person name="Tagami M."/>
            <person name="Waki K."/>
            <person name="Watahiki A."/>
            <person name="Okamura-Oho Y."/>
            <person name="Suzuki H."/>
            <person name="Kawai J."/>
            <person name="Hayashizaki Y."/>
        </authorList>
    </citation>
    <scope>NUCLEOTIDE SEQUENCE [LARGE SCALE MRNA] (ISOFORM 2)</scope>
    <scope>NUCLEOTIDE SEQUENCE [LARGE SCALE MRNA] OF 59-252 (ISOFORM 1)</scope>
    <source>
        <strain>C57BL/6J</strain>
        <tissue>Retina</tissue>
    </source>
</reference>
<reference key="3">
    <citation type="submission" date="2005-09" db="EMBL/GenBank/DDBJ databases">
        <authorList>
            <person name="Mural R.J."/>
            <person name="Adams M.D."/>
            <person name="Myers E.W."/>
            <person name="Smith H.O."/>
            <person name="Venter J.C."/>
        </authorList>
    </citation>
    <scope>NUCLEOTIDE SEQUENCE [LARGE SCALE GENOMIC DNA]</scope>
</reference>
<reference key="4">
    <citation type="journal article" date="2004" name="Genome Res.">
        <title>The status, quality, and expansion of the NIH full-length cDNA project: the Mammalian Gene Collection (MGC).</title>
        <authorList>
            <consortium name="The MGC Project Team"/>
        </authorList>
    </citation>
    <scope>NUCLEOTIDE SEQUENCE [LARGE SCALE MRNA] (ISOFORM 2)</scope>
    <source>
        <tissue>Eye</tissue>
    </source>
</reference>
<name>PANKY_MOUSE</name>
<comment type="function">
    <molecule>Isoform 1</molecule>
    <text evidence="3">Acts as a transcriptional repressor for CRX-activated photoreceptor gene regulation.</text>
</comment>
<comment type="subcellular location">
    <molecule>Isoform 1</molecule>
    <subcellularLocation>
        <location evidence="3">Cytoplasm</location>
        <location evidence="3">Cytosol</location>
    </subcellularLocation>
    <subcellularLocation>
        <location evidence="3">Nucleus</location>
    </subcellularLocation>
</comment>
<comment type="alternative products">
    <event type="alternative splicing"/>
    <isoform>
        <id>Q8BXP5-1</id>
        <name>1</name>
        <name evidence="6">Panky-A</name>
        <sequence type="displayed"/>
    </isoform>
    <isoform>
        <id>Q8BXP5-2</id>
        <name>2</name>
        <name evidence="6">Panky-B</name>
        <sequence type="described" ref="VSP_059268"/>
    </isoform>
</comment>
<comment type="tissue specificity">
    <text evidence="3">Isoform 1: Expressed predominantly in the retina. Isoform 2: Expressed in the pineal gland.</text>
</comment>
<comment type="developmental stage">
    <molecule>Isoform 1</molecule>
    <text evidence="3">Predominantly expressed in developing and mature photoreceptors (at protein level).</text>
</comment>
<comment type="induction">
    <molecule>Isoform 1</molecule>
    <text evidence="3">Expression is up-regulated by the CRX transcription factor.</text>
</comment>
<comment type="sequence caution" evidence="7">
    <conflict type="miscellaneous discrepancy">
        <sequence resource="EMBL-CDS" id="BAC31971"/>
    </conflict>
    <text>Unlikely isoform. Aberrant splice sites.</text>
</comment>
<dbReference type="EMBL" id="FJ895380">
    <property type="protein sequence ID" value="ADA60445.1"/>
    <property type="molecule type" value="mRNA"/>
</dbReference>
<dbReference type="EMBL" id="AK044543">
    <property type="protein sequence ID" value="BAC31971.1"/>
    <property type="status" value="ALT_SEQ"/>
    <property type="molecule type" value="mRNA"/>
</dbReference>
<dbReference type="EMBL" id="AK044546">
    <property type="protein sequence ID" value="BAC31973.1"/>
    <property type="molecule type" value="mRNA"/>
</dbReference>
<dbReference type="EMBL" id="CH466550">
    <property type="protein sequence ID" value="EDL04067.1"/>
    <property type="molecule type" value="Genomic_DNA"/>
</dbReference>
<dbReference type="EMBL" id="BC022726">
    <property type="protein sequence ID" value="AAH22726.1"/>
    <property type="molecule type" value="mRNA"/>
</dbReference>
<dbReference type="CCDS" id="CCDS27845.1">
    <molecule id="Q8BXP5-2"/>
</dbReference>
<dbReference type="RefSeq" id="NP_001361154.1">
    <molecule id="Q8BXP5-1"/>
    <property type="nucleotide sequence ID" value="NM_001374225.1"/>
</dbReference>
<dbReference type="RefSeq" id="NP_659039.1">
    <molecule id="Q8BXP5-2"/>
    <property type="nucleotide sequence ID" value="NM_144790.1"/>
</dbReference>
<dbReference type="RefSeq" id="XP_006520750.1">
    <property type="nucleotide sequence ID" value="XM_006520687.1"/>
</dbReference>
<dbReference type="SMR" id="Q8BXP5"/>
<dbReference type="BioGRID" id="228969">
    <property type="interactions" value="2"/>
</dbReference>
<dbReference type="FunCoup" id="Q8BXP5">
    <property type="interactions" value="1"/>
</dbReference>
<dbReference type="IntAct" id="Q8BXP5">
    <property type="interactions" value="1"/>
</dbReference>
<dbReference type="STRING" id="10090.ENSMUSP00000067028"/>
<dbReference type="iPTMnet" id="Q8BXP5"/>
<dbReference type="PhosphoSitePlus" id="Q8BXP5"/>
<dbReference type="PaxDb" id="10090-ENSMUSP00000067028"/>
<dbReference type="ProteomicsDB" id="294245">
    <molecule id="Q8BXP5-1"/>
</dbReference>
<dbReference type="Antibodypedia" id="50682">
    <property type="antibodies" value="63 antibodies from 19 providers"/>
</dbReference>
<dbReference type="DNASU" id="208258"/>
<dbReference type="Ensembl" id="ENSMUST00000070875.8">
    <molecule id="Q8BXP5-2"/>
    <property type="protein sequence ID" value="ENSMUSP00000067028.7"/>
    <property type="gene ID" value="ENSMUSG00000047034.11"/>
</dbReference>
<dbReference type="Ensembl" id="ENSMUST00000229954.2">
    <molecule id="Q8BXP5-1"/>
    <property type="protein sequence ID" value="ENSMUSP00000155584.2"/>
    <property type="gene ID" value="ENSMUSG00000047034.11"/>
</dbReference>
<dbReference type="GeneID" id="208258"/>
<dbReference type="KEGG" id="mmu:208258"/>
<dbReference type="UCSC" id="uc007xsk.1">
    <molecule id="Q8BXP5-2"/>
    <property type="organism name" value="mouse"/>
</dbReference>
<dbReference type="UCSC" id="uc011zzq.1">
    <property type="organism name" value="mouse"/>
</dbReference>
<dbReference type="AGR" id="MGI:2443398"/>
<dbReference type="CTD" id="341405"/>
<dbReference type="MGI" id="MGI:2443398">
    <property type="gene designation" value="Ankrd33"/>
</dbReference>
<dbReference type="VEuPathDB" id="HostDB:ENSMUSG00000047034"/>
<dbReference type="eggNOG" id="ENOG502QRWZ">
    <property type="taxonomic scope" value="Eukaryota"/>
</dbReference>
<dbReference type="GeneTree" id="ENSGT00500000044852"/>
<dbReference type="HOGENOM" id="CLU_049994_1_0_1"/>
<dbReference type="InParanoid" id="Q8BXP5"/>
<dbReference type="OMA" id="RPQVPKI"/>
<dbReference type="OrthoDB" id="10057496at2759"/>
<dbReference type="TreeFam" id="TF332022"/>
<dbReference type="BioGRID-ORCS" id="208258">
    <property type="hits" value="3 hits in 77 CRISPR screens"/>
</dbReference>
<dbReference type="ChiTaRS" id="Ankrd33">
    <property type="organism name" value="mouse"/>
</dbReference>
<dbReference type="PRO" id="PR:Q8BXP5"/>
<dbReference type="Proteomes" id="UP000000589">
    <property type="component" value="Chromosome 15"/>
</dbReference>
<dbReference type="RNAct" id="Q8BXP5">
    <property type="molecule type" value="protein"/>
</dbReference>
<dbReference type="Bgee" id="ENSMUSG00000047034">
    <property type="expression patterns" value="Expressed in retinal neural layer and 12 other cell types or tissues"/>
</dbReference>
<dbReference type="ExpressionAtlas" id="Q8BXP5">
    <property type="expression patterns" value="baseline and differential"/>
</dbReference>
<dbReference type="GO" id="GO:0005829">
    <property type="term" value="C:cytosol"/>
    <property type="evidence" value="ECO:0000314"/>
    <property type="project" value="MGI"/>
</dbReference>
<dbReference type="GO" id="GO:0005634">
    <property type="term" value="C:nucleus"/>
    <property type="evidence" value="ECO:0000314"/>
    <property type="project" value="MGI"/>
</dbReference>
<dbReference type="GO" id="GO:0000122">
    <property type="term" value="P:negative regulation of transcription by RNA polymerase II"/>
    <property type="evidence" value="ECO:0000314"/>
    <property type="project" value="MGI"/>
</dbReference>
<dbReference type="GO" id="GO:0035914">
    <property type="term" value="P:skeletal muscle cell differentiation"/>
    <property type="evidence" value="ECO:0000315"/>
    <property type="project" value="MGI"/>
</dbReference>
<dbReference type="FunFam" id="1.25.40.20:FF:000360">
    <property type="entry name" value="Ankyrin repeat domain 33"/>
    <property type="match status" value="1"/>
</dbReference>
<dbReference type="Gene3D" id="1.25.40.20">
    <property type="entry name" value="Ankyrin repeat-containing domain"/>
    <property type="match status" value="1"/>
</dbReference>
<dbReference type="InterPro" id="IPR002110">
    <property type="entry name" value="Ankyrin_rpt"/>
</dbReference>
<dbReference type="InterPro" id="IPR036770">
    <property type="entry name" value="Ankyrin_rpt-contain_sf"/>
</dbReference>
<dbReference type="PANTHER" id="PTHR24173">
    <property type="entry name" value="ANKYRIN REPEAT CONTAINING"/>
    <property type="match status" value="1"/>
</dbReference>
<dbReference type="PANTHER" id="PTHR24173:SF29">
    <property type="entry name" value="PHOTORECEPTOR ANKYRIN REPEAT PROTEIN"/>
    <property type="match status" value="1"/>
</dbReference>
<dbReference type="Pfam" id="PF12796">
    <property type="entry name" value="Ank_2"/>
    <property type="match status" value="1"/>
</dbReference>
<dbReference type="SMART" id="SM00248">
    <property type="entry name" value="ANK"/>
    <property type="match status" value="5"/>
</dbReference>
<dbReference type="SUPFAM" id="SSF48403">
    <property type="entry name" value="Ankyrin repeat"/>
    <property type="match status" value="1"/>
</dbReference>
<dbReference type="PROSITE" id="PS50297">
    <property type="entry name" value="ANK_REP_REGION"/>
    <property type="match status" value="1"/>
</dbReference>
<dbReference type="PROSITE" id="PS50088">
    <property type="entry name" value="ANK_REPEAT"/>
    <property type="match status" value="2"/>
</dbReference>
<feature type="chain" id="PRO_0000243909" description="Photoreceptor ankyrin repeat protein">
    <location>
        <begin position="1"/>
        <end position="385"/>
    </location>
</feature>
<feature type="repeat" description="ANK 1" evidence="1">
    <location>
        <begin position="17"/>
        <end position="46"/>
    </location>
</feature>
<feature type="repeat" description="ANK 2" evidence="1">
    <location>
        <begin position="53"/>
        <end position="83"/>
    </location>
</feature>
<feature type="repeat" description="ANK 3" evidence="1">
    <location>
        <begin position="87"/>
        <end position="116"/>
    </location>
</feature>
<feature type="repeat" description="ANK 4" evidence="1">
    <location>
        <begin position="122"/>
        <end position="151"/>
    </location>
</feature>
<feature type="repeat" description="ANK 5" evidence="1">
    <location>
        <begin position="156"/>
        <end position="190"/>
    </location>
</feature>
<feature type="region of interest" description="Disordered" evidence="2">
    <location>
        <begin position="270"/>
        <end position="385"/>
    </location>
</feature>
<feature type="compositionally biased region" description="Pro residues" evidence="2">
    <location>
        <begin position="284"/>
        <end position="297"/>
    </location>
</feature>
<feature type="compositionally biased region" description="Polar residues" evidence="2">
    <location>
        <begin position="304"/>
        <end position="326"/>
    </location>
</feature>
<feature type="compositionally biased region" description="Basic and acidic residues" evidence="2">
    <location>
        <begin position="361"/>
        <end position="373"/>
    </location>
</feature>
<feature type="compositionally biased region" description="Gly residues" evidence="2">
    <location>
        <begin position="374"/>
        <end position="385"/>
    </location>
</feature>
<feature type="splice variant" id="VSP_059268" description="In isoform 2." evidence="4 5">
    <original>MSEALPFPSNKTSTPECNLKTLYWACVHNDLAELQARLDAGVSPEEASQVDSNGR</original>
    <variation>METLESQ</variation>
    <location>
        <begin position="1"/>
        <end position="55"/>
    </location>
</feature>
<feature type="sequence conflict" description="In Ref. 2; BAC31973." evidence="7" ref="2">
    <original>A</original>
    <variation>V</variation>
    <location>
        <position position="71"/>
    </location>
</feature>
<feature type="sequence conflict" description="In Ref. 2; BAC31973." evidence="7" ref="2">
    <original>L</original>
    <variation>Q</variation>
    <location>
        <position position="190"/>
    </location>
</feature>
<sequence length="385" mass="41599">MSEALPFPSNKTSTPECNLKTLYWACVHNDLAELQARLDAGVSPEEASQVDSNGRTGLMVACYHGFGSIVALLSCCPFLDVNQQDKDGNTALMLAAQAGHMSLVTLLLNYFAGLDLERRDQRGLTALMKAAIQDRSECVVALLMAGADLSSVDPVRGKTALEWAVLTDSFDTAQKIRQLLRRPQAEQLSLHYQPEWPALAQLVAQAQAQAQAPAAPSLLERLQATLSLSFAQSPQEGGVLDHLVTVTTSLASPFLSTACHTLCPDHPPKLGTRGKSVPELLGTAPPPPPEPHPPQQVPVPQVFAPNQSPQSMFSQWLQSRDSTRSQVPKILLSKAPSPSARYELTLRPQGQQSLAPPVWRFQERKKKEEETEPRGGGLGQAGGSK</sequence>